<proteinExistence type="inferred from homology"/>
<sequence length="3258" mass="372401">MVVTLTKLERLQKAEKSRTFKPLIDELINCEDAVFVGKLEAIREWDRPKDDLFLWIPVLDRMDDMLGKVVAKYKYHTTDCKRHPVKLIEMAKPDEDWVATLLFFTCRLLNNTSNRSLYSSLDMMSDLLNCPNFRVKLGAMKVIATIGERHVVARHRIENSSVLASQHLKKRSLSLALALPSSTTDDNSDHFSLVDLFFDKRKYPSKWSQLQYTYYITKKQAGQQSTQKPSQVSSMKRFVLNNEELRFLSLQQIFDRAMNDLPSEFWFDFSLQASIAKAFSDDSFENIQLRSLIIQTKFAAIAFANAIYIPPQVSSKLFEMDPYAFNNLTDFISLSETKIPKDLRTDALFALECISLKHVWCSDIVRNLGGNMSHGLLFQILRYIAKVLREGDEDAVDEEYNVRFFYLISNLADVKALQESLISAGLISSLLEIVSTQNSKYKRTLASAAHLLEDVISDADATAEFINNNGFNILIQTVTYEVNFAVQNPSSAEPPKYSVVYYSISFRQLGFIRSLLKLVLKLLKTDSGDRIRNLIDSPILLAFNKILENRPVFGYTLVSHALDVVQTIINTEPTIYQVLVESGTIPYILQNFDQFLGPTSDLLCMLPEVISAICLNTDGLKQVKEKNLLKYLFQVIKTPEFAKILSWEDQAVNYGVALDELARHYPELKPLIEDYFAATVKELPSLTSYTHSYLYESTAGNGEFYLSENETIIDNEDGADELAFWEVQESSPIIDCFSGVFYSMASENISWANLTEKIAFQDFLSVAIPEKPTFDYINSQTLLNFTDVLKMFDDERRSYALPELLTILDSKFADLEDFLSYDFTKSYVLNEPKDRVVATLNKLNVLNVILYIMTDIYINITTLFPVRVIQMMEFFEKNGFNLITNLRKMFQRCVLEEMYIRSRLPPAVAEETISPGISFVPPILIHKDVPLKTEAKQEKTSAKFKNTLETRHLFQKVQSWTSMLFRCFLRLTHARKMNVERYDRALEIRIFDKVVNEIVEMLNLDYLDSHLSYFLVVLDFNTHIFTCPKASLTISDGIVQTVPTFLFYQAGGFAIYHELIKKLSTRLLGFDGIEAIEKVEYVKDQDDILTVGVLMNSIAFMNRCIQLETMENIRSIAEYYPYDDIYYNLTRALIVPVKILSLGAISEIFSQGEVFDTDRRRIPYSVFKQILSLLKNIYNSTFELEEGTDVYELRWDLMPISHRKVEMLKSCGISHDVAVGYLEEEKDELPIHVKPDVFSDSEWQRYQEERSSGSWRTNIELLPPQYNGSSTRETLSKMRTEFYQNGFESGILKILQHYPKLINAISHMFFEMYGELGFSHTTMLEDLQDMMNTIPIENTNKLAPVIHLFGIFLNDKNIYDQAKKEIFKFVSYLSMNLHPENVNYSWFSKALYVYEIIFAKSETPEASPLPENVTVSFSSIPIIYRISQKDKDIIFNLLIRANEVTDFYSALAISRILILYTREERYAQEVTQSGILSKLLKVIGANQKFDKINYLESSYLLLVRRCFETKEIVTSLIDYELTRAFTTRAIGDHKEKPRDLPALVNEKASIVMRDPEVFVNRISETARFEDFNSSKELASLSVRRHMDEKDEEMTSKPLSSEGSNSPITGIVHLLLSQLMAAHKRDWVSETPLTPEEENQKNKKKKDEVKVSKNPVCAYMIFLLKVLTELVSSYKQSKFEFLTYNKKNVYNETPKPRATALNFFLYQLLDTNFQDMDKHEGKRRAMISGLARDTIIGFVSSVQDSETKKVDPKIVDSDMTYIRKFTIEAISKAIKEAGVSAKTIDANAGKLFGWFHLISSLLVVDKGYIFSVLDSNKSSNDKYQLCKLLIEMNTPGTITDCMASLDLNYPLTKKLFNSAVEPLNALNEVRNNFADLFKLENNEDEDVEDVESDKDDVPDMFKNSALGMYDIEDVEDDHDDDENESLIGDDEDIAFVHDEDGLEVVFSEDEDANEDTTDASNSIGSDSEGNSDFGGSGPNVTLEVYTDSEDAIEDVNTAAIRITSGNSAEHSYYSEGEDSAEIEIYEEEYDSEIDIDMDDDSELGSSNWESGLSDLSDSEAYSDEERTNNTGDGFVRWYSDDGVEFEDDTDEEGRGLFTGIQHVFPTEEQLFRVHASGAARSTGRHHHRHGAAPFTTSTITLGASQRRPHSILSNPLGPSGLEEVENDIVSHYLGNVETSDRIGLSSIPRLPRVLLFDGELFDDKSSSGILLKSTTARWNDIYEMFYDSKVYSNNVVTTIISRIFEPSAELYLKEQEENAVKESSRINEPTRRQDERKRKLHEIDSDEEHIEEEEEHDEVVEPIEAPGINSPQARAPQEPVYVTIDGEAVNIAGTDMDAEFLNALPDDIRAEVFAQHIREYRTQFQGSEGSSRELDAGFLNTIPETLRQEILAQEVPLERNARPSILGLRNREGEEFSEVEDESPRFNEQRTESSKTKTDRVHFAPLLDRSGIAAIMKAVFIPQPYLSREIYHELFYRLCSSKQNRSDIMNMLLLILMDGINDQHSLERVYNLLSNRAASSNSGTSKTPQRQLPPDCTPLIVTNQCIEILQSMVDADSKLKYFFITEHENLLINKSPLKNKKDIFSKNMKWPINCILALLEKKVITDEAVLMDLLTRILQVCSKPISSIVKSSKDGKKKKFEVPDIEKKYLASIVSIIKLDSCNTKVFQQTLNLMTNLFAIKDAHETFTTELCNLAKETIEVLVTDLDALAKEVPAVDSGTEVSSEIIQKFTVPSSDQSKLLKVLTAIDYIYVNRKKEEEQVVDQLLPLYNKMELGHIWVSLSNCLTRFEEKPRMSTSATILLPLIESLMVVCKHSKVRETKDALLKYEAKKCDFARTPVENLFFAFTDLHKKLLNEMIRSNPKLMSGPFSLLVKNPKILDFDNKRYYFTAQLRAITHDRPKLSISVRREHVFLDSYRSLFFKSNEDIKISKLEISFKGEAGVDAGGITREWYQVLSRQMFNPDYALFIPVASDKTTFRPNRTSGINPEHLSFFKFIGMIIGKAISDQCFLDCHFSREVYKNILGKPVALKDMESLDLDYYKSLIWILENDITDIIEETFSVETDDYGEHKVIELIENGAHVAVTEQNKHDYVKKIVEYKLQTSVKDQMENFLQGFYAIIPKDLISIFDEQELELLVSGLPDIDVDDWKNNTIYVNYTPTCKQINYFWRAVRSFDKEERAKLLQFVTGTSKVPLNGFKELSGVNGISKFSIHRDYGSIDRLPSSHTCFNQLDLPAYDSYETLRGSLLLAINEGHEGFGIA</sequence>
<organism>
    <name type="scientific">Eremothecium gossypii (strain ATCC 10895 / CBS 109.51 / FGSC 9923 / NRRL Y-1056)</name>
    <name type="common">Yeast</name>
    <name type="synonym">Ashbya gossypii</name>
    <dbReference type="NCBI Taxonomy" id="284811"/>
    <lineage>
        <taxon>Eukaryota</taxon>
        <taxon>Fungi</taxon>
        <taxon>Dikarya</taxon>
        <taxon>Ascomycota</taxon>
        <taxon>Saccharomycotina</taxon>
        <taxon>Saccharomycetes</taxon>
        <taxon>Saccharomycetales</taxon>
        <taxon>Saccharomycetaceae</taxon>
        <taxon>Eremothecium</taxon>
    </lineage>
</organism>
<reference key="1">
    <citation type="journal article" date="2004" name="Science">
        <title>The Ashbya gossypii genome as a tool for mapping the ancient Saccharomyces cerevisiae genome.</title>
        <authorList>
            <person name="Dietrich F.S."/>
            <person name="Voegeli S."/>
            <person name="Brachat S."/>
            <person name="Lerch A."/>
            <person name="Gates K."/>
            <person name="Steiner S."/>
            <person name="Mohr C."/>
            <person name="Poehlmann R."/>
            <person name="Luedi P."/>
            <person name="Choi S."/>
            <person name="Wing R.A."/>
            <person name="Flavier A."/>
            <person name="Gaffney T.D."/>
            <person name="Philippsen P."/>
        </authorList>
    </citation>
    <scope>NUCLEOTIDE SEQUENCE [LARGE SCALE GENOMIC DNA]</scope>
    <source>
        <strain>ATCC 10895 / CBS 109.51 / FGSC 9923 / NRRL Y-1056</strain>
    </source>
</reference>
<reference key="2">
    <citation type="journal article" date="2013" name="G3 (Bethesda)">
        <title>Genomes of Ashbya fungi isolated from insects reveal four mating-type loci, numerous translocations, lack of transposons, and distinct gene duplications.</title>
        <authorList>
            <person name="Dietrich F.S."/>
            <person name="Voegeli S."/>
            <person name="Kuo S."/>
            <person name="Philippsen P."/>
        </authorList>
    </citation>
    <scope>GENOME REANNOTATION</scope>
    <scope>SEQUENCE REVISION TO 2812</scope>
    <source>
        <strain>ATCC 10895 / CBS 109.51 / FGSC 9923 / NRRL Y-1056</strain>
    </source>
</reference>
<keyword id="KW-0509">mRNA transport</keyword>
<keyword id="KW-0539">Nucleus</keyword>
<keyword id="KW-1185">Reference proteome</keyword>
<keyword id="KW-0808">Transferase</keyword>
<keyword id="KW-0813">Transport</keyword>
<keyword id="KW-0833">Ubl conjugation pathway</keyword>
<name>TOM1_EREGS</name>
<accession>Q756G2</accession>
<gene>
    <name type="primary">TOM1</name>
    <name type="ordered locus">AER304C</name>
</gene>
<protein>
    <recommendedName>
        <fullName>Probable E3 ubiquitin-protein ligase TOM1</fullName>
        <ecNumber>2.3.2.26</ecNumber>
    </recommendedName>
    <alternativeName>
        <fullName>HECT-type E3 ubiquitin transferase TOM1</fullName>
    </alternativeName>
</protein>
<feature type="chain" id="PRO_0000120345" description="Probable E3 ubiquitin-protein ligase TOM1">
    <location>
        <begin position="1"/>
        <end position="3258"/>
    </location>
</feature>
<feature type="domain" description="HECT" evidence="2">
    <location>
        <begin position="2922"/>
        <end position="3258"/>
    </location>
</feature>
<feature type="region of interest" description="Disordered" evidence="3">
    <location>
        <begin position="1582"/>
        <end position="1603"/>
    </location>
</feature>
<feature type="region of interest" description="Disordered" evidence="3">
    <location>
        <begin position="1945"/>
        <end position="1981"/>
    </location>
</feature>
<feature type="region of interest" description="Disordered" evidence="3">
    <location>
        <begin position="2036"/>
        <end position="2074"/>
    </location>
</feature>
<feature type="region of interest" description="Disordered" evidence="3">
    <location>
        <begin position="2254"/>
        <end position="2298"/>
    </location>
</feature>
<feature type="region of interest" description="Disordered" evidence="3">
    <location>
        <begin position="2411"/>
        <end position="2436"/>
    </location>
</feature>
<feature type="compositionally biased region" description="Basic and acidic residues" evidence="3">
    <location>
        <begin position="1584"/>
        <end position="1594"/>
    </location>
</feature>
<feature type="compositionally biased region" description="Acidic residues" evidence="3">
    <location>
        <begin position="1945"/>
        <end position="1956"/>
    </location>
</feature>
<feature type="compositionally biased region" description="Polar residues" evidence="3">
    <location>
        <begin position="1959"/>
        <end position="1969"/>
    </location>
</feature>
<feature type="compositionally biased region" description="Polar residues" evidence="3">
    <location>
        <begin position="2042"/>
        <end position="2054"/>
    </location>
</feature>
<feature type="compositionally biased region" description="Basic and acidic residues" evidence="3">
    <location>
        <begin position="2254"/>
        <end position="2282"/>
    </location>
</feature>
<feature type="compositionally biased region" description="Acidic residues" evidence="3">
    <location>
        <begin position="2283"/>
        <end position="2298"/>
    </location>
</feature>
<feature type="compositionally biased region" description="Basic and acidic residues" evidence="3">
    <location>
        <begin position="2421"/>
        <end position="2436"/>
    </location>
</feature>
<feature type="active site" description="Glycyl thioester intermediate" evidence="2">
    <location>
        <position position="3225"/>
    </location>
</feature>
<evidence type="ECO:0000250" key="1">
    <source>
        <dbReference type="UniProtKB" id="Q03280"/>
    </source>
</evidence>
<evidence type="ECO:0000255" key="2">
    <source>
        <dbReference type="PROSITE-ProRule" id="PRU00104"/>
    </source>
</evidence>
<evidence type="ECO:0000256" key="3">
    <source>
        <dbReference type="SAM" id="MobiDB-lite"/>
    </source>
</evidence>
<evidence type="ECO:0000305" key="4"/>
<dbReference type="EC" id="2.3.2.26"/>
<dbReference type="EMBL" id="AE016818">
    <property type="protein sequence ID" value="AAS52985.2"/>
    <property type="molecule type" value="Genomic_DNA"/>
</dbReference>
<dbReference type="RefSeq" id="NP_985161.2">
    <property type="nucleotide sequence ID" value="NM_210515.2"/>
</dbReference>
<dbReference type="SMR" id="Q756G2"/>
<dbReference type="FunCoup" id="Q756G2">
    <property type="interactions" value="1160"/>
</dbReference>
<dbReference type="STRING" id="284811.Q756G2"/>
<dbReference type="EnsemblFungi" id="AAS52985">
    <property type="protein sequence ID" value="AAS52985"/>
    <property type="gene ID" value="AGOS_AER304C"/>
</dbReference>
<dbReference type="GeneID" id="4621374"/>
<dbReference type="KEGG" id="ago:AGOS_AER304C"/>
<dbReference type="eggNOG" id="KOG0939">
    <property type="taxonomic scope" value="Eukaryota"/>
</dbReference>
<dbReference type="HOGENOM" id="CLU_000215_0_1_1"/>
<dbReference type="InParanoid" id="Q756G2"/>
<dbReference type="OMA" id="DCHFSRE"/>
<dbReference type="OrthoDB" id="8068875at2759"/>
<dbReference type="UniPathway" id="UPA00143"/>
<dbReference type="Proteomes" id="UP000000591">
    <property type="component" value="Chromosome V"/>
</dbReference>
<dbReference type="GO" id="GO:0005737">
    <property type="term" value="C:cytoplasm"/>
    <property type="evidence" value="ECO:0000318"/>
    <property type="project" value="GO_Central"/>
</dbReference>
<dbReference type="GO" id="GO:0005730">
    <property type="term" value="C:nucleolus"/>
    <property type="evidence" value="ECO:0007669"/>
    <property type="project" value="UniProtKB-SubCell"/>
</dbReference>
<dbReference type="GO" id="GO:0005634">
    <property type="term" value="C:nucleus"/>
    <property type="evidence" value="ECO:0000318"/>
    <property type="project" value="GO_Central"/>
</dbReference>
<dbReference type="GO" id="GO:0061630">
    <property type="term" value="F:ubiquitin protein ligase activity"/>
    <property type="evidence" value="ECO:0000318"/>
    <property type="project" value="GO_Central"/>
</dbReference>
<dbReference type="GO" id="GO:0046907">
    <property type="term" value="P:intracellular transport"/>
    <property type="evidence" value="ECO:0007669"/>
    <property type="project" value="UniProtKB-ARBA"/>
</dbReference>
<dbReference type="GO" id="GO:0051028">
    <property type="term" value="P:mRNA transport"/>
    <property type="evidence" value="ECO:0007669"/>
    <property type="project" value="UniProtKB-KW"/>
</dbReference>
<dbReference type="GO" id="GO:0016567">
    <property type="term" value="P:protein ubiquitination"/>
    <property type="evidence" value="ECO:0007669"/>
    <property type="project" value="UniProtKB-UniPathway"/>
</dbReference>
<dbReference type="GO" id="GO:0006511">
    <property type="term" value="P:ubiquitin-dependent protein catabolic process"/>
    <property type="evidence" value="ECO:0000318"/>
    <property type="project" value="GO_Central"/>
</dbReference>
<dbReference type="CDD" id="cd00078">
    <property type="entry name" value="HECTc"/>
    <property type="match status" value="1"/>
</dbReference>
<dbReference type="FunFam" id="3.30.2410.10:FF:000004">
    <property type="entry name" value="E3 ubiquitin-protein ligase HUWE1, variant"/>
    <property type="match status" value="1"/>
</dbReference>
<dbReference type="FunFam" id="3.30.2160.10:FF:000001">
    <property type="entry name" value="E3 ubiquitin-protein ligase NEDD4-like"/>
    <property type="match status" value="1"/>
</dbReference>
<dbReference type="FunFam" id="3.90.1750.10:FF:000003">
    <property type="entry name" value="E3 ubiquitin-protein ligase UPL1"/>
    <property type="match status" value="1"/>
</dbReference>
<dbReference type="Gene3D" id="3.30.2160.10">
    <property type="entry name" value="Hect, E3 ligase catalytic domain"/>
    <property type="match status" value="1"/>
</dbReference>
<dbReference type="Gene3D" id="3.30.2410.10">
    <property type="entry name" value="Hect, E3 ligase catalytic domain"/>
    <property type="match status" value="1"/>
</dbReference>
<dbReference type="Gene3D" id="3.90.1750.10">
    <property type="entry name" value="Hect, E3 ligase catalytic domains"/>
    <property type="match status" value="1"/>
</dbReference>
<dbReference type="Gene3D" id="1.25.10.10">
    <property type="entry name" value="Leucine-rich Repeat Variant"/>
    <property type="match status" value="1"/>
</dbReference>
<dbReference type="InterPro" id="IPR011989">
    <property type="entry name" value="ARM-like"/>
</dbReference>
<dbReference type="InterPro" id="IPR016024">
    <property type="entry name" value="ARM-type_fold"/>
</dbReference>
<dbReference type="InterPro" id="IPR010309">
    <property type="entry name" value="E3_Ub_ligase_DUF908"/>
</dbReference>
<dbReference type="InterPro" id="IPR010314">
    <property type="entry name" value="E3_Ub_ligase_DUF913"/>
</dbReference>
<dbReference type="InterPro" id="IPR050409">
    <property type="entry name" value="E3_ubiq-protein_ligase"/>
</dbReference>
<dbReference type="InterPro" id="IPR000569">
    <property type="entry name" value="HECT_dom"/>
</dbReference>
<dbReference type="InterPro" id="IPR035983">
    <property type="entry name" value="Hect_E3_ubiquitin_ligase"/>
</dbReference>
<dbReference type="InterPro" id="IPR025527">
    <property type="entry name" value="HUWE1/Rev1_UBM"/>
</dbReference>
<dbReference type="PANTHER" id="PTHR11254:SF67">
    <property type="entry name" value="E3 UBIQUITIN-PROTEIN LIGASE HUWE1"/>
    <property type="match status" value="1"/>
</dbReference>
<dbReference type="PANTHER" id="PTHR11254">
    <property type="entry name" value="HECT DOMAIN UBIQUITIN-PROTEIN LIGASE"/>
    <property type="match status" value="1"/>
</dbReference>
<dbReference type="Pfam" id="PF06012">
    <property type="entry name" value="DUF908"/>
    <property type="match status" value="1"/>
</dbReference>
<dbReference type="Pfam" id="PF06025">
    <property type="entry name" value="DUF913"/>
    <property type="match status" value="1"/>
</dbReference>
<dbReference type="Pfam" id="PF00632">
    <property type="entry name" value="HECT"/>
    <property type="match status" value="1"/>
</dbReference>
<dbReference type="Pfam" id="PF14377">
    <property type="entry name" value="UBM"/>
    <property type="match status" value="2"/>
</dbReference>
<dbReference type="SMART" id="SM00119">
    <property type="entry name" value="HECTc"/>
    <property type="match status" value="1"/>
</dbReference>
<dbReference type="SUPFAM" id="SSF48371">
    <property type="entry name" value="ARM repeat"/>
    <property type="match status" value="1"/>
</dbReference>
<dbReference type="SUPFAM" id="SSF56204">
    <property type="entry name" value="Hect, E3 ligase catalytic domain"/>
    <property type="match status" value="1"/>
</dbReference>
<dbReference type="PROSITE" id="PS50237">
    <property type="entry name" value="HECT"/>
    <property type="match status" value="1"/>
</dbReference>
<comment type="function">
    <text evidence="1">Probable ubiquitin ligase protein, which may be involved in mRNA export. E3 ubiquitin ligase proteins mediate ubiquitination and subsequent proteasomal degradation of target proteins. Participates in mRNA export from the nucleus by regulating the transport of hnRNP proteins.</text>
</comment>
<comment type="catalytic activity">
    <reaction>
        <text>S-ubiquitinyl-[E2 ubiquitin-conjugating enzyme]-L-cysteine + [acceptor protein]-L-lysine = [E2 ubiquitin-conjugating enzyme]-L-cysteine + N(6)-ubiquitinyl-[acceptor protein]-L-lysine.</text>
        <dbReference type="EC" id="2.3.2.26"/>
    </reaction>
</comment>
<comment type="pathway">
    <text>Protein modification; protein ubiquitination.</text>
</comment>
<comment type="subcellular location">
    <subcellularLocation>
        <location evidence="1">Nucleus</location>
        <location evidence="1">Nucleolus</location>
    </subcellularLocation>
</comment>
<comment type="similarity">
    <text evidence="4">Belongs to the UPL family. TOM1/PTR1 subfamily.</text>
</comment>